<dbReference type="EC" id="2.3.1.47" evidence="1"/>
<dbReference type="EMBL" id="AE017180">
    <property type="protein sequence ID" value="AAR36001.1"/>
    <property type="molecule type" value="Genomic_DNA"/>
</dbReference>
<dbReference type="RefSeq" id="NP_953674.1">
    <property type="nucleotide sequence ID" value="NC_002939.5"/>
</dbReference>
<dbReference type="RefSeq" id="WP_010943267.1">
    <property type="nucleotide sequence ID" value="NC_002939.5"/>
</dbReference>
<dbReference type="SMR" id="Q749W3"/>
<dbReference type="FunCoup" id="Q749W3">
    <property type="interactions" value="392"/>
</dbReference>
<dbReference type="STRING" id="243231.GSU2629"/>
<dbReference type="EnsemblBacteria" id="AAR36001">
    <property type="protein sequence ID" value="AAR36001"/>
    <property type="gene ID" value="GSU2629"/>
</dbReference>
<dbReference type="KEGG" id="gsu:GSU2629"/>
<dbReference type="PATRIC" id="fig|243231.5.peg.2659"/>
<dbReference type="eggNOG" id="COG0156">
    <property type="taxonomic scope" value="Bacteria"/>
</dbReference>
<dbReference type="HOGENOM" id="CLU_015846_11_0_7"/>
<dbReference type="InParanoid" id="Q749W3"/>
<dbReference type="OrthoDB" id="9807157at2"/>
<dbReference type="UniPathway" id="UPA00078"/>
<dbReference type="Proteomes" id="UP000000577">
    <property type="component" value="Chromosome"/>
</dbReference>
<dbReference type="GO" id="GO:0008710">
    <property type="term" value="F:8-amino-7-oxononanoate synthase activity"/>
    <property type="evidence" value="ECO:0000318"/>
    <property type="project" value="GO_Central"/>
</dbReference>
<dbReference type="GO" id="GO:0030170">
    <property type="term" value="F:pyridoxal phosphate binding"/>
    <property type="evidence" value="ECO:0007669"/>
    <property type="project" value="InterPro"/>
</dbReference>
<dbReference type="GO" id="GO:0009102">
    <property type="term" value="P:biotin biosynthetic process"/>
    <property type="evidence" value="ECO:0000318"/>
    <property type="project" value="GO_Central"/>
</dbReference>
<dbReference type="CDD" id="cd06454">
    <property type="entry name" value="KBL_like"/>
    <property type="match status" value="1"/>
</dbReference>
<dbReference type="FunFam" id="3.40.640.10:FF:000006">
    <property type="entry name" value="5-aminolevulinate synthase, mitochondrial"/>
    <property type="match status" value="1"/>
</dbReference>
<dbReference type="Gene3D" id="3.90.1150.10">
    <property type="entry name" value="Aspartate Aminotransferase, domain 1"/>
    <property type="match status" value="1"/>
</dbReference>
<dbReference type="Gene3D" id="3.40.640.10">
    <property type="entry name" value="Type I PLP-dependent aspartate aminotransferase-like (Major domain)"/>
    <property type="match status" value="1"/>
</dbReference>
<dbReference type="HAMAP" id="MF_01693">
    <property type="entry name" value="BioF_aminotrans_2"/>
    <property type="match status" value="1"/>
</dbReference>
<dbReference type="InterPro" id="IPR001917">
    <property type="entry name" value="Aminotrans_II_pyridoxalP_BS"/>
</dbReference>
<dbReference type="InterPro" id="IPR004839">
    <property type="entry name" value="Aminotransferase_I/II_large"/>
</dbReference>
<dbReference type="InterPro" id="IPR050087">
    <property type="entry name" value="AON_synthase_class-II"/>
</dbReference>
<dbReference type="InterPro" id="IPR004723">
    <property type="entry name" value="AONS_Archaea/Proteobacteria"/>
</dbReference>
<dbReference type="InterPro" id="IPR022834">
    <property type="entry name" value="AONS_Proteobacteria"/>
</dbReference>
<dbReference type="InterPro" id="IPR015424">
    <property type="entry name" value="PyrdxlP-dep_Trfase"/>
</dbReference>
<dbReference type="InterPro" id="IPR015421">
    <property type="entry name" value="PyrdxlP-dep_Trfase_major"/>
</dbReference>
<dbReference type="InterPro" id="IPR015422">
    <property type="entry name" value="PyrdxlP-dep_Trfase_small"/>
</dbReference>
<dbReference type="NCBIfam" id="TIGR00858">
    <property type="entry name" value="bioF"/>
    <property type="match status" value="1"/>
</dbReference>
<dbReference type="PANTHER" id="PTHR13693:SF100">
    <property type="entry name" value="8-AMINO-7-OXONONANOATE SYNTHASE"/>
    <property type="match status" value="1"/>
</dbReference>
<dbReference type="PANTHER" id="PTHR13693">
    <property type="entry name" value="CLASS II AMINOTRANSFERASE/8-AMINO-7-OXONONANOATE SYNTHASE"/>
    <property type="match status" value="1"/>
</dbReference>
<dbReference type="Pfam" id="PF00155">
    <property type="entry name" value="Aminotran_1_2"/>
    <property type="match status" value="1"/>
</dbReference>
<dbReference type="SUPFAM" id="SSF53383">
    <property type="entry name" value="PLP-dependent transferases"/>
    <property type="match status" value="1"/>
</dbReference>
<dbReference type="PROSITE" id="PS00599">
    <property type="entry name" value="AA_TRANSFER_CLASS_2"/>
    <property type="match status" value="1"/>
</dbReference>
<keyword id="KW-0093">Biotin biosynthesis</keyword>
<keyword id="KW-0663">Pyridoxal phosphate</keyword>
<keyword id="KW-1185">Reference proteome</keyword>
<keyword id="KW-0808">Transferase</keyword>
<accession>Q749W3</accession>
<feature type="chain" id="PRO_0000380998" description="8-amino-7-oxononanoate synthase">
    <location>
        <begin position="1"/>
        <end position="391"/>
    </location>
</feature>
<feature type="binding site" evidence="1">
    <location>
        <position position="19"/>
    </location>
    <ligand>
        <name>substrate</name>
    </ligand>
</feature>
<feature type="binding site" evidence="1">
    <location>
        <begin position="106"/>
        <end position="107"/>
    </location>
    <ligand>
        <name>pyridoxal 5'-phosphate</name>
        <dbReference type="ChEBI" id="CHEBI:597326"/>
    </ligand>
</feature>
<feature type="binding site" evidence="1">
    <location>
        <position position="131"/>
    </location>
    <ligand>
        <name>substrate</name>
    </ligand>
</feature>
<feature type="binding site" evidence="1">
    <location>
        <position position="178"/>
    </location>
    <ligand>
        <name>pyridoxal 5'-phosphate</name>
        <dbReference type="ChEBI" id="CHEBI:597326"/>
    </ligand>
</feature>
<feature type="binding site" evidence="1">
    <location>
        <position position="206"/>
    </location>
    <ligand>
        <name>pyridoxal 5'-phosphate</name>
        <dbReference type="ChEBI" id="CHEBI:597326"/>
    </ligand>
</feature>
<feature type="binding site" evidence="1">
    <location>
        <position position="234"/>
    </location>
    <ligand>
        <name>pyridoxal 5'-phosphate</name>
        <dbReference type="ChEBI" id="CHEBI:597326"/>
    </ligand>
</feature>
<feature type="binding site" evidence="1">
    <location>
        <position position="353"/>
    </location>
    <ligand>
        <name>substrate</name>
    </ligand>
</feature>
<feature type="modified residue" description="N6-(pyridoxal phosphate)lysine" evidence="1">
    <location>
        <position position="237"/>
    </location>
</feature>
<sequence>MTRSIAGELQQLREQGLYRSLRTVAGSQGSRVVAEGREVVLLCSNNYLGLADHPSLKRAAVEAVERYGTGSGASRLVSGTMELHAALEERLARFKGTEAALVFNSGYAANSGIIPALVGRGDVVFSDRLNHASIVDGCLLSRARFVRYPHNDMNALERLLAEHRGAGRMLIVTDGVFSMDGDLAPLPALVALKRQYGALLMVDDAHGTGVLGESGRGSAEQFEVAADIDLQMGTLGKALGGFGAYVAASAEVVELLINRARSFIFSTSLPPAVLAAARAALDLVDSPEGKALRRRLARSAALFRDALQEAGFDTMGSETQIVPALVGEAEPAMTFTRRLLEEGFYVQGIRPPTVPAGTCRLRCTLMATHDESDLERAVAAMARIGKELGIV</sequence>
<evidence type="ECO:0000255" key="1">
    <source>
        <dbReference type="HAMAP-Rule" id="MF_01693"/>
    </source>
</evidence>
<proteinExistence type="inferred from homology"/>
<gene>
    <name evidence="1" type="primary">bioF</name>
    <name type="ordered locus">GSU2629</name>
</gene>
<organism>
    <name type="scientific">Geobacter sulfurreducens (strain ATCC 51573 / DSM 12127 / PCA)</name>
    <dbReference type="NCBI Taxonomy" id="243231"/>
    <lineage>
        <taxon>Bacteria</taxon>
        <taxon>Pseudomonadati</taxon>
        <taxon>Thermodesulfobacteriota</taxon>
        <taxon>Desulfuromonadia</taxon>
        <taxon>Geobacterales</taxon>
        <taxon>Geobacteraceae</taxon>
        <taxon>Geobacter</taxon>
    </lineage>
</organism>
<reference key="1">
    <citation type="journal article" date="2003" name="Science">
        <title>Genome of Geobacter sulfurreducens: metal reduction in subsurface environments.</title>
        <authorList>
            <person name="Methe B.A."/>
            <person name="Nelson K.E."/>
            <person name="Eisen J.A."/>
            <person name="Paulsen I.T."/>
            <person name="Nelson W.C."/>
            <person name="Heidelberg J.F."/>
            <person name="Wu D."/>
            <person name="Wu M."/>
            <person name="Ward N.L."/>
            <person name="Beanan M.J."/>
            <person name="Dodson R.J."/>
            <person name="Madupu R."/>
            <person name="Brinkac L.M."/>
            <person name="Daugherty S.C."/>
            <person name="DeBoy R.T."/>
            <person name="Durkin A.S."/>
            <person name="Gwinn M.L."/>
            <person name="Kolonay J.F."/>
            <person name="Sullivan S.A."/>
            <person name="Haft D.H."/>
            <person name="Selengut J."/>
            <person name="Davidsen T.M."/>
            <person name="Zafar N."/>
            <person name="White O."/>
            <person name="Tran B."/>
            <person name="Romero C."/>
            <person name="Forberger H.A."/>
            <person name="Weidman J.F."/>
            <person name="Khouri H.M."/>
            <person name="Feldblyum T.V."/>
            <person name="Utterback T.R."/>
            <person name="Van Aken S.E."/>
            <person name="Lovley D.R."/>
            <person name="Fraser C.M."/>
        </authorList>
    </citation>
    <scope>NUCLEOTIDE SEQUENCE [LARGE SCALE GENOMIC DNA]</scope>
    <source>
        <strain>ATCC 51573 / DSM 12127 / PCA</strain>
    </source>
</reference>
<protein>
    <recommendedName>
        <fullName evidence="1">8-amino-7-oxononanoate synthase</fullName>
        <shortName evidence="1">AONS</shortName>
        <ecNumber evidence="1">2.3.1.47</ecNumber>
    </recommendedName>
    <alternativeName>
        <fullName evidence="1">7-keto-8-amino-pelargonic acid synthase</fullName>
        <shortName evidence="1">7-KAP synthase</shortName>
        <shortName evidence="1">KAPA synthase</shortName>
    </alternativeName>
    <alternativeName>
        <fullName evidence="1">8-amino-7-ketopelargonate synthase</fullName>
    </alternativeName>
</protein>
<name>BIOF_GEOSL</name>
<comment type="function">
    <text evidence="1">Catalyzes the decarboxylative condensation of pimeloyl-[acyl-carrier protein] and L-alanine to produce 8-amino-7-oxononanoate (AON), [acyl-carrier protein], and carbon dioxide.</text>
</comment>
<comment type="catalytic activity">
    <reaction evidence="1">
        <text>6-carboxyhexanoyl-[ACP] + L-alanine + H(+) = (8S)-8-amino-7-oxononanoate + holo-[ACP] + CO2</text>
        <dbReference type="Rhea" id="RHEA:42288"/>
        <dbReference type="Rhea" id="RHEA-COMP:9685"/>
        <dbReference type="Rhea" id="RHEA-COMP:9955"/>
        <dbReference type="ChEBI" id="CHEBI:15378"/>
        <dbReference type="ChEBI" id="CHEBI:16526"/>
        <dbReference type="ChEBI" id="CHEBI:57972"/>
        <dbReference type="ChEBI" id="CHEBI:64479"/>
        <dbReference type="ChEBI" id="CHEBI:78846"/>
        <dbReference type="ChEBI" id="CHEBI:149468"/>
        <dbReference type="EC" id="2.3.1.47"/>
    </reaction>
</comment>
<comment type="cofactor">
    <cofactor evidence="1">
        <name>pyridoxal 5'-phosphate</name>
        <dbReference type="ChEBI" id="CHEBI:597326"/>
    </cofactor>
</comment>
<comment type="pathway">
    <text evidence="1">Cofactor biosynthesis; biotin biosynthesis.</text>
</comment>
<comment type="subunit">
    <text evidence="1">Homodimer.</text>
</comment>
<comment type="similarity">
    <text evidence="1">Belongs to the class-II pyridoxal-phosphate-dependent aminotransferase family. BioF subfamily.</text>
</comment>